<feature type="chain" id="PRO_0000085591" description="5'-AMP-activated protein kinase catalytic subunit alpha-1">
    <location>
        <begin position="1" status="less than"/>
        <end position="385" status="greater than"/>
    </location>
</feature>
<feature type="domain" description="Protein kinase" evidence="5">
    <location>
        <begin position="1" status="less than"/>
        <end position="229"/>
    </location>
</feature>
<feature type="region of interest" description="AIS" evidence="3">
    <location>
        <begin position="252"/>
        <end position="297"/>
    </location>
</feature>
<feature type="active site" description="Proton acceptor" evidence="5 6">
    <location>
        <position position="100"/>
    </location>
</feature>
<feature type="binding site" evidence="5">
    <location>
        <begin position="15"/>
        <end position="22" status="greater than"/>
    </location>
    <ligand>
        <name>ATP</name>
        <dbReference type="ChEBI" id="CHEBI:30616"/>
    </ligand>
</feature>
<feature type="modified residue" description="Phosphothreonine" evidence="3">
    <location>
        <position position="14"/>
    </location>
</feature>
<feature type="modified residue" description="Phosphothreonine; by LKB1 and CaMKK2" evidence="4">
    <location>
        <position position="133"/>
    </location>
</feature>
<feature type="modified residue" description="Phosphothreonine" evidence="2">
    <location>
        <position position="219"/>
    </location>
</feature>
<feature type="modified residue" description="Phosphothreonine" evidence="3">
    <location>
        <position position="276"/>
    </location>
</feature>
<feature type="modified residue" description="Phosphoserine" evidence="3">
    <location>
        <position position="277"/>
    </location>
</feature>
<feature type="modified residue" description="Phosphoserine; by ULK1" evidence="2">
    <location>
        <position position="281"/>
    </location>
</feature>
<feature type="modified residue" description="Phosphothreonine; by ULK1" evidence="2">
    <location>
        <position position="289"/>
    </location>
</feature>
<feature type="modified residue" description="Phosphothreonine" evidence="3">
    <location>
        <position position="298"/>
    </location>
</feature>
<feature type="modified residue" description="Phosphoserine" evidence="3">
    <location>
        <position position="353"/>
    </location>
</feature>
<feature type="modified residue" description="Phosphoserine" evidence="3">
    <location>
        <position position="383"/>
    </location>
</feature>
<feature type="non-consecutive residues" evidence="9">
    <location>
        <begin position="22"/>
        <end position="23"/>
    </location>
</feature>
<feature type="non-consecutive residues" evidence="9">
    <location>
        <begin position="157"/>
        <end position="158"/>
    </location>
</feature>
<feature type="non-consecutive residues" evidence="9">
    <location>
        <begin position="255"/>
        <end position="256"/>
    </location>
</feature>
<feature type="non-consecutive residues" evidence="9">
    <location>
        <begin position="270"/>
        <end position="271"/>
    </location>
</feature>
<feature type="non-consecutive residues" evidence="9">
    <location>
        <begin position="290"/>
        <end position="291"/>
    </location>
</feature>
<feature type="non-consecutive residues" evidence="9">
    <location>
        <begin position="300"/>
        <end position="301"/>
    </location>
</feature>
<feature type="non-consecutive residues" evidence="9">
    <location>
        <begin position="323"/>
        <end position="324"/>
    </location>
</feature>
<feature type="non-consecutive residues" evidence="9">
    <location>
        <begin position="342"/>
        <end position="343"/>
    </location>
</feature>
<feature type="non-consecutive residues" evidence="9">
    <location>
        <begin position="367"/>
        <end position="368"/>
    </location>
</feature>
<feature type="non-terminal residue">
    <location>
        <position position="1"/>
    </location>
</feature>
<feature type="non-terminal residue">
    <location>
        <position position="385"/>
    </location>
</feature>
<protein>
    <recommendedName>
        <fullName>5'-AMP-activated protein kinase catalytic subunit alpha-1</fullName>
        <shortName>AMPK subunit alpha-1</shortName>
        <ecNumber evidence="2">2.7.11.1</ecNumber>
    </recommendedName>
    <alternativeName>
        <fullName>AMPK 63 kDa subunit</fullName>
    </alternativeName>
    <alternativeName>
        <fullName>Acetyl-CoA carboxylase kinase</fullName>
        <shortName>ACACA kinase</shortName>
    </alternativeName>
    <alternativeName>
        <fullName>Hydroxymethylglutaryl-CoA reductase kinase</fullName>
        <shortName>HMGCR kinase</shortName>
        <ecNumber evidence="2">2.7.11.31</ecNumber>
    </alternativeName>
    <alternativeName>
        <fullName>Tau-protein kinase PRKAA1</fullName>
        <ecNumber evidence="2">2.7.11.26</ecNumber>
    </alternativeName>
</protein>
<proteinExistence type="evidence at protein level"/>
<reference key="1">
    <citation type="journal article" date="1994" name="J. Biol. Chem.">
        <title>Mammalian AMP-activated protein kinase shares structural and functional homology with the catalytic domain of yeast Snf1 protein kinase.</title>
        <authorList>
            <person name="Mitchelhill K.I."/>
            <person name="Stapleton D."/>
            <person name="Gao G."/>
            <person name="House C."/>
            <person name="Michell B."/>
            <person name="Katsis F."/>
            <person name="Witters L.A."/>
            <person name="Kemp B.E."/>
        </authorList>
    </citation>
    <scope>PROTEIN SEQUENCE OF 1-22; 73-87; 100-157; 222-240 AND 344-361</scope>
    <scope>FUNCTION</scope>
    <source>
        <tissue>Liver</tissue>
    </source>
</reference>
<reference key="2">
    <citation type="journal article" date="1996" name="J. Biol. Chem.">
        <title>Mammalian AMP-activated protein kinase subfamily.</title>
        <authorList>
            <person name="Stapleton D."/>
            <person name="Mitchelhill K.I."/>
            <person name="Gao G."/>
            <person name="Widmer J."/>
            <person name="Michell B.J."/>
            <person name="Teh T."/>
            <person name="House C.M."/>
            <person name="Fernandez C.S."/>
            <person name="Cox T."/>
            <person name="Witters L.A."/>
            <person name="Kemp B.E."/>
        </authorList>
    </citation>
    <scope>PROTEIN SEQUENCE OF 1-22; 73-88; 100-132; 144-156; 209-216; 221-255; 256-270; 271-290; 291-300; 301-323; 324-342; 343-367 AND 368-385</scope>
    <scope>INDUCTION</scope>
    <source>
        <tissue>Liver</tissue>
    </source>
</reference>
<reference key="3">
    <citation type="submission" date="2008-04" db="EMBL/GenBank/DDBJ databases">
        <title>Effect of dietary hemicellulose on growth and energy metabolism of growing pigs.</title>
        <authorList>
            <person name="Weber T.E."/>
        </authorList>
    </citation>
    <scope>NUCLEOTIDE SEQUENCE [MRNA] OF 23-243</scope>
</reference>
<sequence>DGRVKIGHYILGDTLGVGTFGKRREIQNLKLFRHPHIIKLYQVISTPSDIFMVMEYVSGGELFDYICKNGRLDEKESRRLFQQILSGVDYCHRHMVVHRDLKPENVLLDAHMNAKIADFGLSNMMSDGEFLRTSCGSPNYAAPEVISGRLYAGPEVDIWSSGVILYALLCGTLPFDDDHVPTLFKKICDGIFYTPQYLNPSVISLLKHMLQVDPMKRATIKDIREHEWFKQDLPKYLFPEDPSYSXTMIDDEALKQDPLAVAYHLIIDNRDFYLATSPPDSFLDDHHLTRVPFLVAETPRDELNPQKXKHQGVRKAKXHLGIRQLDYEXKVVNPYYLRVRRKKMSLQLYQVDSRTYLLDFRSIDDXIDAEAQGKSSEASLTXSVT</sequence>
<organism>
    <name type="scientific">Sus scrofa</name>
    <name type="common">Pig</name>
    <dbReference type="NCBI Taxonomy" id="9823"/>
    <lineage>
        <taxon>Eukaryota</taxon>
        <taxon>Metazoa</taxon>
        <taxon>Chordata</taxon>
        <taxon>Craniata</taxon>
        <taxon>Vertebrata</taxon>
        <taxon>Euteleostomi</taxon>
        <taxon>Mammalia</taxon>
        <taxon>Eutheria</taxon>
        <taxon>Laurasiatheria</taxon>
        <taxon>Artiodactyla</taxon>
        <taxon>Suina</taxon>
        <taxon>Suidae</taxon>
        <taxon>Sus</taxon>
    </lineage>
</organism>
<gene>
    <name type="primary">PRKAA1</name>
    <name type="synonym">AMPK1</name>
</gene>
<evidence type="ECO:0000250" key="1"/>
<evidence type="ECO:0000250" key="2">
    <source>
        <dbReference type="UniProtKB" id="P54645"/>
    </source>
</evidence>
<evidence type="ECO:0000250" key="3">
    <source>
        <dbReference type="UniProtKB" id="Q13131"/>
    </source>
</evidence>
<evidence type="ECO:0000250" key="4">
    <source>
        <dbReference type="UniProtKB" id="Q5EG47"/>
    </source>
</evidence>
<evidence type="ECO:0000255" key="5">
    <source>
        <dbReference type="PROSITE-ProRule" id="PRU00159"/>
    </source>
</evidence>
<evidence type="ECO:0000255" key="6">
    <source>
        <dbReference type="PROSITE-ProRule" id="PRU10027"/>
    </source>
</evidence>
<evidence type="ECO:0000269" key="7">
    <source>
    </source>
</evidence>
<evidence type="ECO:0000269" key="8">
    <source>
    </source>
</evidence>
<evidence type="ECO:0000305" key="9"/>
<comment type="function">
    <text evidence="2 3 4 7">Catalytic subunit of AMP-activated protein kinase (AMPK), an energy sensor protein kinase that plays a key role in regulating cellular energy metabolism (PubMed:7905477). In response to reduction of intracellular ATP levels, AMPK activates energy-producing pathways and inhibits energy-consuming processes: inhibits protein, carbohydrate and lipid biosynthesis, as well as cell growth and proliferation. AMPK acts via direct phosphorylation of metabolic enzymes, and by longer-term effects via phosphorylation of transcription regulators (By similarity). Regulates lipid synthesis by phosphorylating and inactivating lipid metabolic enzymes such as ACACA, ACACB, GYS1, HMGCR and LIPE; regulates fatty acid and cholesterol synthesis by phosphorylating acetyl-CoA carboxylase (ACACA and ACACB) and hormone-sensitive lipase (LIPE) enzymes, respectively (By similarity). Promotes lipolysis of lipid droplets by mediating phosphorylation of isoform 1 of CHKA (CHKalpha2) (By similarity). Regulates insulin-signaling and glycolysis by phosphorylating IRS1, PFKFB2 and PFKFB3 (By similarity). AMPK stimulates glucose uptake in muscle by increasing the translocation of the glucose transporter SLC2A4/GLUT4 to the plasma membrane, possibly by mediating phosphorylation of TBC1D4/AS160 (By similarity). Regulates transcription and chromatin structure by phosphorylating transcription regulators involved in energy metabolism such as CRTC2/TORC2, FOXO3, histone H2B, HDAC5, MEF2C, MLXIPL/ChREBP, EP300, HNF4A, p53/TP53, SREBF1, SREBF2 and PPARGC1A (By similarity). Acts as a key regulator of glucose homeostasis in liver by phosphorylating CRTC2/TORC2, leading to CRTC2/TORC2 sequestration in the cytoplasm. In response to stress, phosphorylates 'Ser-36' of histone H2B (H2BS36ph), leading to promote transcription (By similarity). Acts as a key regulator of cell growth and proliferation by phosphorylating FNIP1, TSC2, RPTOR, WDR24 and ATG1/ULK1: in response to nutrient limitation, negatively regulates the mTORC1 complex by phosphorylating RPTOR component of the mTORC1 complex and by phosphorylating and activating TSC2. Also phosphorylates and inhibits GATOR2 subunit WDR24 in response to nutrient limitation, leading to suppress glucose-mediated mTORC1 activation (By similarity). In response to energetic stress, phosphorylates FNIP1, inactivating the non-canonical mTORC1 signaling, thereby promoting nuclear translocation of TFEB and TFE3, and inducing transcription of lysosomal or autophagy genes (By similarity). In response to nutrient limitation, promotes autophagy by phosphorylating and activating ATG1/ULK1. In that process also activates WDR45/WIPI4. Phosphorylates CASP6, thereby preventing its autoprocessing and subsequent activation (By similarity). In response to nutrient limitation, phosphorylates transcription factor FOXO3 promoting FOXO3 mitochondrial import (By similarity). Also acts as a regulator of cellular polarity by remodeling the actin cytoskeleton; probably by indirectly activating myosin (By similarity). AMPK also acts as a regulator of circadian rhythm by mediating phosphorylation of CRY1, leading to destabilize it. May regulate the Wnt signaling pathway by phosphorylating CTNNB1, leading to stabilize it (By similarity). Also has tau-protein kinase activity: in response to amyloid beta A4 protein (APP) exposure, activated by CAMKK2, leading to phosphorylation of MAPT/TAU; however the relevance of such data remains unclear in vivo (By similarity). Also phosphorylates CFTR, EEF2K, KLC1, NOS3 and SLC12A1 (By similarity). Regulates hepatic lipogenesis. Activated via SIRT3, represses sterol regulatory element-binding protein (SREBP) transcriptional activities and ATP-consuming lipogenesis to restore cellular energy balance. Upon stress, regulates mitochondrial fragmentation through phosphorylation of MTFR1L (By similarity).</text>
</comment>
<comment type="catalytic activity">
    <reaction evidence="2">
        <text>L-seryl-[protein] + ATP = O-phospho-L-seryl-[protein] + ADP + H(+)</text>
        <dbReference type="Rhea" id="RHEA:17989"/>
        <dbReference type="Rhea" id="RHEA-COMP:9863"/>
        <dbReference type="Rhea" id="RHEA-COMP:11604"/>
        <dbReference type="ChEBI" id="CHEBI:15378"/>
        <dbReference type="ChEBI" id="CHEBI:29999"/>
        <dbReference type="ChEBI" id="CHEBI:30616"/>
        <dbReference type="ChEBI" id="CHEBI:83421"/>
        <dbReference type="ChEBI" id="CHEBI:456216"/>
        <dbReference type="EC" id="2.7.11.1"/>
    </reaction>
</comment>
<comment type="catalytic activity">
    <reaction evidence="2">
        <text>L-threonyl-[protein] + ATP = O-phospho-L-threonyl-[protein] + ADP + H(+)</text>
        <dbReference type="Rhea" id="RHEA:46608"/>
        <dbReference type="Rhea" id="RHEA-COMP:11060"/>
        <dbReference type="Rhea" id="RHEA-COMP:11605"/>
        <dbReference type="ChEBI" id="CHEBI:15378"/>
        <dbReference type="ChEBI" id="CHEBI:30013"/>
        <dbReference type="ChEBI" id="CHEBI:30616"/>
        <dbReference type="ChEBI" id="CHEBI:61977"/>
        <dbReference type="ChEBI" id="CHEBI:456216"/>
        <dbReference type="EC" id="2.7.11.1"/>
    </reaction>
</comment>
<comment type="catalytic activity">
    <reaction evidence="2">
        <text>L-seryl-[acetyl-CoA carboxylase] + ATP = O-phospho-L-seryl-[acetyl-CoA carboxylase] + ADP + H(+)</text>
        <dbReference type="Rhea" id="RHEA:20333"/>
        <dbReference type="Rhea" id="RHEA-COMP:13722"/>
        <dbReference type="Rhea" id="RHEA-COMP:13723"/>
        <dbReference type="ChEBI" id="CHEBI:15378"/>
        <dbReference type="ChEBI" id="CHEBI:29999"/>
        <dbReference type="ChEBI" id="CHEBI:30616"/>
        <dbReference type="ChEBI" id="CHEBI:83421"/>
        <dbReference type="ChEBI" id="CHEBI:456216"/>
    </reaction>
</comment>
<comment type="catalytic activity">
    <reaction evidence="2">
        <text>L-seryl-[3-hydroxy-3-methylglutaryl-coenzyme A reductase] + ATP = O-phospho-L-seryl-[3-hydroxy-3-methylglutaryl-coenzyme A reductase] + ADP + H(+)</text>
        <dbReference type="Rhea" id="RHEA:23172"/>
        <dbReference type="Rhea" id="RHEA-COMP:13692"/>
        <dbReference type="Rhea" id="RHEA-COMP:13693"/>
        <dbReference type="ChEBI" id="CHEBI:15378"/>
        <dbReference type="ChEBI" id="CHEBI:29999"/>
        <dbReference type="ChEBI" id="CHEBI:30616"/>
        <dbReference type="ChEBI" id="CHEBI:83421"/>
        <dbReference type="ChEBI" id="CHEBI:456216"/>
        <dbReference type="EC" id="2.7.11.31"/>
    </reaction>
</comment>
<comment type="catalytic activity">
    <reaction evidence="2">
        <text>L-seryl-[tau protein] + ATP = O-phospho-L-seryl-[tau protein] + ADP + H(+)</text>
        <dbReference type="Rhea" id="RHEA:12801"/>
        <dbReference type="Rhea" id="RHEA-COMP:13701"/>
        <dbReference type="Rhea" id="RHEA-COMP:13702"/>
        <dbReference type="ChEBI" id="CHEBI:15378"/>
        <dbReference type="ChEBI" id="CHEBI:29999"/>
        <dbReference type="ChEBI" id="CHEBI:30616"/>
        <dbReference type="ChEBI" id="CHEBI:83421"/>
        <dbReference type="ChEBI" id="CHEBI:456216"/>
        <dbReference type="EC" id="2.7.11.26"/>
    </reaction>
</comment>
<comment type="catalytic activity">
    <reaction evidence="2">
        <text>L-threonyl-[tau protein] + ATP = O-phospho-L-threonyl-[tau protein] + ADP + H(+)</text>
        <dbReference type="Rhea" id="RHEA:53904"/>
        <dbReference type="Rhea" id="RHEA-COMP:13703"/>
        <dbReference type="Rhea" id="RHEA-COMP:13704"/>
        <dbReference type="ChEBI" id="CHEBI:15378"/>
        <dbReference type="ChEBI" id="CHEBI:30013"/>
        <dbReference type="ChEBI" id="CHEBI:30616"/>
        <dbReference type="ChEBI" id="CHEBI:61977"/>
        <dbReference type="ChEBI" id="CHEBI:456216"/>
        <dbReference type="EC" id="2.7.11.26"/>
    </reaction>
</comment>
<comment type="cofactor">
    <cofactor evidence="1">
        <name>Mg(2+)</name>
        <dbReference type="ChEBI" id="CHEBI:18420"/>
    </cofactor>
</comment>
<comment type="activity regulation">
    <text evidence="3">Activated by phosphorylation on Thr-133. Binding of AMP to non-catalytic gamma subunit (PRKAG1, PRKAG2 or PRKAG3) results in allosteric activation, inducing phosphorylation on Thr-133. AMP-binding to gamma subunit also sustains activity by preventing dephosphorylation of Thr-133. ADP also stimulates Thr-133 phosphorylation, without stimulating already phosphorylated AMPK. ATP promotes dephosphorylation of Thr-133, rendering the enzyme inactive. Under physiological conditions AMPK mainly exists in its inactive form in complex with ATP, which is much more abundant than AMP. Selectively inhibited by compound C (6-[4-(2-Piperidin-1-yl-ethoxy)-phenyl)]-3-pyridin-4-yl-pyyrazolo[1,5-a] pyrimidine. Activated by resveratrol, a natural polyphenol present in red wine, and S17834, a synthetic polyphenol (By similarity).</text>
</comment>
<comment type="subunit">
    <text evidence="3">AMPK is a heterotrimer of an alpha catalytic subunit (PRKAA1 or PRKAA2), a beta (PRKAB1 or PRKAB2) and a gamma non-catalytic subunits (PRKAG1, PRKAG2 or PRKAG3). Interacts with FNIP1 and FNIP2.</text>
</comment>
<comment type="subcellular location">
    <subcellularLocation>
        <location evidence="3">Cytoplasm</location>
    </subcellularLocation>
    <subcellularLocation>
        <location evidence="3">Nucleus</location>
    </subcellularLocation>
    <text evidence="3">In response to stress, recruited by p53/TP53 to specific promoters.</text>
</comment>
<comment type="induction">
    <text evidence="8">By AMP.</text>
</comment>
<comment type="domain">
    <text evidence="3">The AIS (autoinhibitory sequence) region shows some sequence similarity with the ubiquitin-associated domains and represses kinase activity.</text>
</comment>
<comment type="PTM">
    <text evidence="4">Ubiquitinated.</text>
</comment>
<comment type="PTM">
    <text evidence="3">Phosphorylated at Thr-133 by STK11/LKB1 in complex with STE20-related adapter-alpha (STRADA) pseudo kinase and CAB39. Also phosphorylated at Thr-133 by CAMKK2; triggered by a rise in intracellular calcium ions, without detectable changes in the AMP/ATP ratio. CAMKK1 can also phosphorylate Thr-133, but at a much lower level. Dephosphorylated by protein phosphatase 2A and 2C (PP2A and PP2C). Phosphorylated by ULK1 and ULK2; leading to negatively regulate AMPK activity and suggesting the existence of a regulatory feedback loop between ULK1, ULK2 and AMPK (By similarity). Dephosphorylated by PPM1A and PPM1B (By similarity).</text>
</comment>
<comment type="PTM">
    <text evidence="3">Glycosylated; O-GlcNAcylated by OGT, promoting the AMP-activated protein kinase (AMPK) activity.</text>
</comment>
<comment type="similarity">
    <text evidence="9">Belongs to the protein kinase superfamily. CAMK Ser/Thr protein kinase family. SNF1 subfamily.</text>
</comment>
<accession>Q09136</accession>
<accession>B2MV24</accession>
<dbReference type="EC" id="2.7.11.1" evidence="2"/>
<dbReference type="EC" id="2.7.11.31" evidence="2"/>
<dbReference type="EC" id="2.7.11.26" evidence="2"/>
<dbReference type="EMBL" id="EU622639">
    <property type="protein sequence ID" value="ACC78144.1"/>
    <property type="molecule type" value="mRNA"/>
</dbReference>
<dbReference type="PIR" id="A49958">
    <property type="entry name" value="A49958"/>
</dbReference>
<dbReference type="FunCoup" id="Q09136">
    <property type="interactions" value="104"/>
</dbReference>
<dbReference type="PeptideAtlas" id="Q09136"/>
<dbReference type="InParanoid" id="Q09136"/>
<dbReference type="Proteomes" id="UP000008227">
    <property type="component" value="Unplaced"/>
</dbReference>
<dbReference type="Proteomes" id="UP000314985">
    <property type="component" value="Unplaced"/>
</dbReference>
<dbReference type="Proteomes" id="UP000694570">
    <property type="component" value="Unplaced"/>
</dbReference>
<dbReference type="Proteomes" id="UP000694571">
    <property type="component" value="Unplaced"/>
</dbReference>
<dbReference type="Proteomes" id="UP000694720">
    <property type="component" value="Unplaced"/>
</dbReference>
<dbReference type="Proteomes" id="UP000694722">
    <property type="component" value="Unplaced"/>
</dbReference>
<dbReference type="Proteomes" id="UP000694723">
    <property type="component" value="Unplaced"/>
</dbReference>
<dbReference type="Proteomes" id="UP000694724">
    <property type="component" value="Unplaced"/>
</dbReference>
<dbReference type="Proteomes" id="UP000694725">
    <property type="component" value="Unplaced"/>
</dbReference>
<dbReference type="Proteomes" id="UP000694726">
    <property type="component" value="Unplaced"/>
</dbReference>
<dbReference type="Proteomes" id="UP000694727">
    <property type="component" value="Unplaced"/>
</dbReference>
<dbReference type="Proteomes" id="UP000694728">
    <property type="component" value="Unplaced"/>
</dbReference>
<dbReference type="GO" id="GO:0005737">
    <property type="term" value="C:cytoplasm"/>
    <property type="evidence" value="ECO:0000318"/>
    <property type="project" value="GO_Central"/>
</dbReference>
<dbReference type="GO" id="GO:0031588">
    <property type="term" value="C:nucleotide-activated protein kinase complex"/>
    <property type="evidence" value="ECO:0000250"/>
    <property type="project" value="UniProtKB"/>
</dbReference>
<dbReference type="GO" id="GO:0005634">
    <property type="term" value="C:nucleus"/>
    <property type="evidence" value="ECO:0000250"/>
    <property type="project" value="UniProtKB"/>
</dbReference>
<dbReference type="GO" id="GO:0047322">
    <property type="term" value="F:[hydroxymethylglutaryl-CoA reductase (NADPH)] kinase activity"/>
    <property type="evidence" value="ECO:0007669"/>
    <property type="project" value="UniProtKB-EC"/>
</dbReference>
<dbReference type="GO" id="GO:0004679">
    <property type="term" value="F:AMP-activated protein kinase activity"/>
    <property type="evidence" value="ECO:0000250"/>
    <property type="project" value="UniProtKB"/>
</dbReference>
<dbReference type="GO" id="GO:0005524">
    <property type="term" value="F:ATP binding"/>
    <property type="evidence" value="ECO:0007669"/>
    <property type="project" value="UniProtKB-KW"/>
</dbReference>
<dbReference type="GO" id="GO:0003682">
    <property type="term" value="F:chromatin binding"/>
    <property type="evidence" value="ECO:0000250"/>
    <property type="project" value="UniProtKB"/>
</dbReference>
<dbReference type="GO" id="GO:0140823">
    <property type="term" value="F:histone H2BS36 kinase activity"/>
    <property type="evidence" value="ECO:0000250"/>
    <property type="project" value="UniProtKB"/>
</dbReference>
<dbReference type="GO" id="GO:0046872">
    <property type="term" value="F:metal ion binding"/>
    <property type="evidence" value="ECO:0007669"/>
    <property type="project" value="UniProtKB-KW"/>
</dbReference>
<dbReference type="GO" id="GO:0106310">
    <property type="term" value="F:protein serine kinase activity"/>
    <property type="evidence" value="ECO:0007669"/>
    <property type="project" value="RHEA"/>
</dbReference>
<dbReference type="GO" id="GO:0004674">
    <property type="term" value="F:protein serine/threonine kinase activity"/>
    <property type="evidence" value="ECO:0000250"/>
    <property type="project" value="UniProtKB"/>
</dbReference>
<dbReference type="GO" id="GO:0006914">
    <property type="term" value="P:autophagy"/>
    <property type="evidence" value="ECO:0007669"/>
    <property type="project" value="UniProtKB-KW"/>
</dbReference>
<dbReference type="GO" id="GO:0042149">
    <property type="term" value="P:cellular response to glucose starvation"/>
    <property type="evidence" value="ECO:0000250"/>
    <property type="project" value="UniProtKB"/>
</dbReference>
<dbReference type="GO" id="GO:0031669">
    <property type="term" value="P:cellular response to nutrient levels"/>
    <property type="evidence" value="ECO:0000250"/>
    <property type="project" value="UniProtKB"/>
</dbReference>
<dbReference type="GO" id="GO:0006695">
    <property type="term" value="P:cholesterol biosynthetic process"/>
    <property type="evidence" value="ECO:0007669"/>
    <property type="project" value="UniProtKB-KW"/>
</dbReference>
<dbReference type="GO" id="GO:0097009">
    <property type="term" value="P:energy homeostasis"/>
    <property type="evidence" value="ECO:0000250"/>
    <property type="project" value="UniProtKB"/>
</dbReference>
<dbReference type="GO" id="GO:0006633">
    <property type="term" value="P:fatty acid biosynthetic process"/>
    <property type="evidence" value="ECO:0007669"/>
    <property type="project" value="UniProtKB-KW"/>
</dbReference>
<dbReference type="GO" id="GO:0055089">
    <property type="term" value="P:fatty acid homeostasis"/>
    <property type="evidence" value="ECO:0000250"/>
    <property type="project" value="UniProtKB"/>
</dbReference>
<dbReference type="GO" id="GO:0042593">
    <property type="term" value="P:glucose homeostasis"/>
    <property type="evidence" value="ECO:0000250"/>
    <property type="project" value="UniProtKB"/>
</dbReference>
<dbReference type="GO" id="GO:0008610">
    <property type="term" value="P:lipid biosynthetic process"/>
    <property type="evidence" value="ECO:0000250"/>
    <property type="project" value="UniProtKB"/>
</dbReference>
<dbReference type="GO" id="GO:1905691">
    <property type="term" value="P:lipid droplet disassembly"/>
    <property type="evidence" value="ECO:0000250"/>
    <property type="project" value="UniProtKB"/>
</dbReference>
<dbReference type="GO" id="GO:0043066">
    <property type="term" value="P:negative regulation of apoptotic process"/>
    <property type="evidence" value="ECO:0000250"/>
    <property type="project" value="UniProtKB"/>
</dbReference>
<dbReference type="GO" id="GO:1903944">
    <property type="term" value="P:negative regulation of hepatocyte apoptotic process"/>
    <property type="evidence" value="ECO:0000250"/>
    <property type="project" value="UniProtKB"/>
</dbReference>
<dbReference type="GO" id="GO:0050995">
    <property type="term" value="P:negative regulation of lipid catabolic process"/>
    <property type="evidence" value="ECO:0000250"/>
    <property type="project" value="UniProtKB"/>
</dbReference>
<dbReference type="GO" id="GO:0032007">
    <property type="term" value="P:negative regulation of TOR signaling"/>
    <property type="evidence" value="ECO:0000250"/>
    <property type="project" value="UniProtKB"/>
</dbReference>
<dbReference type="GO" id="GO:1904262">
    <property type="term" value="P:negative regulation of TORC1 signaling"/>
    <property type="evidence" value="ECO:0000250"/>
    <property type="project" value="UniProtKB"/>
</dbReference>
<dbReference type="GO" id="GO:0010508">
    <property type="term" value="P:positive regulation of autophagy"/>
    <property type="evidence" value="ECO:0000250"/>
    <property type="project" value="UniProtKB"/>
</dbReference>
<dbReference type="GO" id="GO:0045821">
    <property type="term" value="P:positive regulation of glycolytic process"/>
    <property type="evidence" value="ECO:0000250"/>
    <property type="project" value="UniProtKB"/>
</dbReference>
<dbReference type="GO" id="GO:1990044">
    <property type="term" value="P:protein localization to lipid droplet"/>
    <property type="evidence" value="ECO:0000250"/>
    <property type="project" value="UniProtKB"/>
</dbReference>
<dbReference type="GO" id="GO:0042752">
    <property type="term" value="P:regulation of circadian rhythm"/>
    <property type="evidence" value="ECO:0000250"/>
    <property type="project" value="UniProtKB"/>
</dbReference>
<dbReference type="GO" id="GO:0010332">
    <property type="term" value="P:response to gamma radiation"/>
    <property type="evidence" value="ECO:0000250"/>
    <property type="project" value="UniProtKB"/>
</dbReference>
<dbReference type="GO" id="GO:0048511">
    <property type="term" value="P:rhythmic process"/>
    <property type="evidence" value="ECO:0007669"/>
    <property type="project" value="UniProtKB-KW"/>
</dbReference>
<dbReference type="GO" id="GO:0016055">
    <property type="term" value="P:Wnt signaling pathway"/>
    <property type="evidence" value="ECO:0007669"/>
    <property type="project" value="UniProtKB-KW"/>
</dbReference>
<dbReference type="CDD" id="cd14079">
    <property type="entry name" value="STKc_AMPK_alpha"/>
    <property type="match status" value="1"/>
</dbReference>
<dbReference type="FunFam" id="1.10.510.10:FF:000079">
    <property type="entry name" value="Non-specific serine/threonine protein kinase"/>
    <property type="match status" value="1"/>
</dbReference>
<dbReference type="FunFam" id="3.30.200.20:FF:001336">
    <property type="entry name" value="Non-specific serine/threonine protein kinase"/>
    <property type="match status" value="1"/>
</dbReference>
<dbReference type="Gene3D" id="1.10.8.10">
    <property type="entry name" value="DNA helicase RuvA subunit, C-terminal domain"/>
    <property type="match status" value="1"/>
</dbReference>
<dbReference type="Gene3D" id="3.30.310.80">
    <property type="entry name" value="Kinase associated domain 1, KA1"/>
    <property type="match status" value="1"/>
</dbReference>
<dbReference type="Gene3D" id="3.30.200.20">
    <property type="entry name" value="Phosphorylase Kinase, domain 1"/>
    <property type="match status" value="1"/>
</dbReference>
<dbReference type="Gene3D" id="1.10.510.10">
    <property type="entry name" value="Transferase(Phosphotransferase) domain 1"/>
    <property type="match status" value="1"/>
</dbReference>
<dbReference type="InterPro" id="IPR028375">
    <property type="entry name" value="KA1/Ssp2_C"/>
</dbReference>
<dbReference type="InterPro" id="IPR011009">
    <property type="entry name" value="Kinase-like_dom_sf"/>
</dbReference>
<dbReference type="InterPro" id="IPR000719">
    <property type="entry name" value="Prot_kinase_dom"/>
</dbReference>
<dbReference type="InterPro" id="IPR008271">
    <property type="entry name" value="Ser/Thr_kinase_AS"/>
</dbReference>
<dbReference type="PANTHER" id="PTHR24346:SF87">
    <property type="entry name" value="ACETYL-COA CARBOXYLASE KINASE"/>
    <property type="match status" value="1"/>
</dbReference>
<dbReference type="PANTHER" id="PTHR24346">
    <property type="entry name" value="MAP/MICROTUBULE AFFINITY-REGULATING KINASE"/>
    <property type="match status" value="1"/>
</dbReference>
<dbReference type="Pfam" id="PF00069">
    <property type="entry name" value="Pkinase"/>
    <property type="match status" value="1"/>
</dbReference>
<dbReference type="SMART" id="SM00220">
    <property type="entry name" value="S_TKc"/>
    <property type="match status" value="1"/>
</dbReference>
<dbReference type="SUPFAM" id="SSF103243">
    <property type="entry name" value="KA1-like"/>
    <property type="match status" value="1"/>
</dbReference>
<dbReference type="SUPFAM" id="SSF56112">
    <property type="entry name" value="Protein kinase-like (PK-like)"/>
    <property type="match status" value="1"/>
</dbReference>
<dbReference type="PROSITE" id="PS50011">
    <property type="entry name" value="PROTEIN_KINASE_DOM"/>
    <property type="match status" value="1"/>
</dbReference>
<dbReference type="PROSITE" id="PS00108">
    <property type="entry name" value="PROTEIN_KINASE_ST"/>
    <property type="match status" value="1"/>
</dbReference>
<name>AAPK1_PIG</name>
<keyword id="KW-0067">ATP-binding</keyword>
<keyword id="KW-0072">Autophagy</keyword>
<keyword id="KW-0090">Biological rhythms</keyword>
<keyword id="KW-0152">Cholesterol biosynthesis</keyword>
<keyword id="KW-0153">Cholesterol metabolism</keyword>
<keyword id="KW-0156">Chromatin regulator</keyword>
<keyword id="KW-0963">Cytoplasm</keyword>
<keyword id="KW-0903">Direct protein sequencing</keyword>
<keyword id="KW-0275">Fatty acid biosynthesis</keyword>
<keyword id="KW-0276">Fatty acid metabolism</keyword>
<keyword id="KW-0325">Glycoprotein</keyword>
<keyword id="KW-0418">Kinase</keyword>
<keyword id="KW-0444">Lipid biosynthesis</keyword>
<keyword id="KW-0443">Lipid metabolism</keyword>
<keyword id="KW-0460">Magnesium</keyword>
<keyword id="KW-0479">Metal-binding</keyword>
<keyword id="KW-0547">Nucleotide-binding</keyword>
<keyword id="KW-0539">Nucleus</keyword>
<keyword id="KW-0597">Phosphoprotein</keyword>
<keyword id="KW-1185">Reference proteome</keyword>
<keyword id="KW-0723">Serine/threonine-protein kinase</keyword>
<keyword id="KW-0752">Steroid biosynthesis</keyword>
<keyword id="KW-0753">Steroid metabolism</keyword>
<keyword id="KW-0756">Sterol biosynthesis</keyword>
<keyword id="KW-1207">Sterol metabolism</keyword>
<keyword id="KW-0804">Transcription</keyword>
<keyword id="KW-0805">Transcription regulation</keyword>
<keyword id="KW-0808">Transferase</keyword>
<keyword id="KW-0832">Ubl conjugation</keyword>
<keyword id="KW-0879">Wnt signaling pathway</keyword>